<proteinExistence type="evidence at protein level"/>
<comment type="subcellular location">
    <subcellularLocation>
        <location evidence="2">Secreted</location>
    </subcellularLocation>
</comment>
<comment type="tissue specificity">
    <text evidence="4">Expressed by the venom duct.</text>
</comment>
<comment type="domain">
    <text evidence="3">The cysteine framework is III (CC-C-C-CC). Classified in the M-2 branch, since 2 residues stand between the fourth and the fifth cysteine residues.</text>
</comment>
<comment type="similarity">
    <text evidence="3">Belongs to the conotoxin M superfamily.</text>
</comment>
<organism>
    <name type="scientific">Conus textile</name>
    <name type="common">Cloth-of-gold cone</name>
    <dbReference type="NCBI Taxonomy" id="6494"/>
    <lineage>
        <taxon>Eukaryota</taxon>
        <taxon>Metazoa</taxon>
        <taxon>Spiralia</taxon>
        <taxon>Lophotrochozoa</taxon>
        <taxon>Mollusca</taxon>
        <taxon>Gastropoda</taxon>
        <taxon>Caenogastropoda</taxon>
        <taxon>Neogastropoda</taxon>
        <taxon>Conoidea</taxon>
        <taxon>Conidae</taxon>
        <taxon>Conus</taxon>
        <taxon>Cylinder</taxon>
    </lineage>
</organism>
<sequence>GCCGVPSCMAGCRPCC</sequence>
<accession>P0DPK8</accession>
<reference key="1">
    <citation type="journal article" date="2012" name="J. Proteome Res.">
        <title>Constrained de novo sequencing of conotoxins.</title>
        <authorList>
            <person name="Bhatia S."/>
            <person name="Kil Y.J."/>
            <person name="Ueberheide B."/>
            <person name="Chait B.T."/>
            <person name="Tayo L."/>
            <person name="Cruz L."/>
            <person name="Lu B."/>
            <person name="Yates J.R. III"/>
            <person name="Bern M."/>
        </authorList>
    </citation>
    <scope>PROTEIN SEQUENCE</scope>
    <scope>IDENTIFICATION BY MASS SPECTROMETRY</scope>
    <scope>SUBCELLULAR LOCATION</scope>
    <scope>OXIDATION AT MET-9</scope>
    <scope>AMIDATION AT CYS-16</scope>
    <source>
        <tissue>Venom</tissue>
    </source>
</reference>
<feature type="peptide" id="PRO_0000445044" description="Conotoxin SI.13" evidence="2">
    <location>
        <begin position="1"/>
        <end position="16"/>
    </location>
</feature>
<feature type="modified residue" description="Methionine sulfoxide; partial" evidence="2">
    <location>
        <position position="9"/>
    </location>
</feature>
<feature type="modified residue" description="Cysteine amide" evidence="2">
    <location>
        <position position="16"/>
    </location>
</feature>
<feature type="disulfide bond" evidence="1">
    <location>
        <begin position="2"/>
        <end position="16"/>
    </location>
</feature>
<feature type="disulfide bond" evidence="1">
    <location>
        <begin position="3"/>
        <end position="12"/>
    </location>
</feature>
<feature type="disulfide bond" evidence="1">
    <location>
        <begin position="8"/>
        <end position="15"/>
    </location>
</feature>
<protein>
    <recommendedName>
        <fullName evidence="3">Conotoxin SI.13</fullName>
    </recommendedName>
</protein>
<evidence type="ECO:0000250" key="1">
    <source>
        <dbReference type="UniProtKB" id="P0CI24"/>
    </source>
</evidence>
<evidence type="ECO:0000269" key="2">
    <source>
    </source>
</evidence>
<evidence type="ECO:0000305" key="3"/>
<evidence type="ECO:0000305" key="4">
    <source>
    </source>
</evidence>
<name>M313_CONTE</name>
<dbReference type="GO" id="GO:0005576">
    <property type="term" value="C:extracellular region"/>
    <property type="evidence" value="ECO:0007669"/>
    <property type="project" value="UniProtKB-SubCell"/>
</dbReference>
<dbReference type="GO" id="GO:0090729">
    <property type="term" value="F:toxin activity"/>
    <property type="evidence" value="ECO:0007669"/>
    <property type="project" value="UniProtKB-KW"/>
</dbReference>
<keyword id="KW-0027">Amidation</keyword>
<keyword id="KW-0903">Direct protein sequencing</keyword>
<keyword id="KW-1015">Disulfide bond</keyword>
<keyword id="KW-0558">Oxidation</keyword>
<keyword id="KW-0964">Secreted</keyword>
<keyword id="KW-0800">Toxin</keyword>